<organism>
    <name type="scientific">Dehalococcoides mccartyi (strain CBDB1)</name>
    <dbReference type="NCBI Taxonomy" id="255470"/>
    <lineage>
        <taxon>Bacteria</taxon>
        <taxon>Bacillati</taxon>
        <taxon>Chloroflexota</taxon>
        <taxon>Dehalococcoidia</taxon>
        <taxon>Dehalococcoidales</taxon>
        <taxon>Dehalococcoidaceae</taxon>
        <taxon>Dehalococcoides</taxon>
    </lineage>
</organism>
<sequence>MTKRTASIKRQTTETTISLSLNLDGTGQADMCTGVRLFDHMLSQLAKHGLFDINISANGDDIHHLVEDVALTLGKAFNEALGERKGIVRMADATVPMDDSLASVALDLSGRGYAVMDLSFAKNDLTGFPTDLVRHFLETFAIEGRLNLHARILYGSNDHHKAEALFKALARALDKATSIDPRREGVAPSTKGMLEN</sequence>
<gene>
    <name evidence="1" type="primary">hisB</name>
    <name type="ordered locus">cbdbA824</name>
</gene>
<feature type="chain" id="PRO_1000010276" description="Imidazoleglycerol-phosphate dehydratase">
    <location>
        <begin position="1"/>
        <end position="196"/>
    </location>
</feature>
<protein>
    <recommendedName>
        <fullName evidence="1">Imidazoleglycerol-phosphate dehydratase</fullName>
        <shortName evidence="1">IGPD</shortName>
        <ecNumber evidence="1">4.2.1.19</ecNumber>
    </recommendedName>
</protein>
<comment type="catalytic activity">
    <reaction evidence="1">
        <text>D-erythro-1-(imidazol-4-yl)glycerol 3-phosphate = 3-(imidazol-4-yl)-2-oxopropyl phosphate + H2O</text>
        <dbReference type="Rhea" id="RHEA:11040"/>
        <dbReference type="ChEBI" id="CHEBI:15377"/>
        <dbReference type="ChEBI" id="CHEBI:57766"/>
        <dbReference type="ChEBI" id="CHEBI:58278"/>
        <dbReference type="EC" id="4.2.1.19"/>
    </reaction>
</comment>
<comment type="pathway">
    <text evidence="1">Amino-acid biosynthesis; L-histidine biosynthesis; L-histidine from 5-phospho-alpha-D-ribose 1-diphosphate: step 6/9.</text>
</comment>
<comment type="subcellular location">
    <subcellularLocation>
        <location evidence="1">Cytoplasm</location>
    </subcellularLocation>
</comment>
<comment type="similarity">
    <text evidence="1">Belongs to the imidazoleglycerol-phosphate dehydratase family.</text>
</comment>
<dbReference type="EC" id="4.2.1.19" evidence="1"/>
<dbReference type="EMBL" id="AJ965256">
    <property type="protein sequence ID" value="CAI82969.1"/>
    <property type="molecule type" value="Genomic_DNA"/>
</dbReference>
<dbReference type="RefSeq" id="WP_011309320.1">
    <property type="nucleotide sequence ID" value="NC_007356.1"/>
</dbReference>
<dbReference type="SMR" id="Q3ZXL9"/>
<dbReference type="KEGG" id="deh:cbdbA824"/>
<dbReference type="HOGENOM" id="CLU_044308_2_0_0"/>
<dbReference type="UniPathway" id="UPA00031">
    <property type="reaction ID" value="UER00011"/>
</dbReference>
<dbReference type="Proteomes" id="UP000000433">
    <property type="component" value="Chromosome"/>
</dbReference>
<dbReference type="GO" id="GO:0005737">
    <property type="term" value="C:cytoplasm"/>
    <property type="evidence" value="ECO:0007669"/>
    <property type="project" value="UniProtKB-SubCell"/>
</dbReference>
<dbReference type="GO" id="GO:0004424">
    <property type="term" value="F:imidazoleglycerol-phosphate dehydratase activity"/>
    <property type="evidence" value="ECO:0007669"/>
    <property type="project" value="UniProtKB-UniRule"/>
</dbReference>
<dbReference type="GO" id="GO:0000105">
    <property type="term" value="P:L-histidine biosynthetic process"/>
    <property type="evidence" value="ECO:0007669"/>
    <property type="project" value="UniProtKB-UniRule"/>
</dbReference>
<dbReference type="CDD" id="cd07914">
    <property type="entry name" value="IGPD"/>
    <property type="match status" value="1"/>
</dbReference>
<dbReference type="FunFam" id="3.30.230.40:FF:000001">
    <property type="entry name" value="Imidazoleglycerol-phosphate dehydratase HisB"/>
    <property type="match status" value="1"/>
</dbReference>
<dbReference type="FunFam" id="3.30.230.40:FF:000003">
    <property type="entry name" value="Imidazoleglycerol-phosphate dehydratase HisB"/>
    <property type="match status" value="1"/>
</dbReference>
<dbReference type="Gene3D" id="3.30.230.40">
    <property type="entry name" value="Imidazole glycerol phosphate dehydratase, domain 1"/>
    <property type="match status" value="2"/>
</dbReference>
<dbReference type="HAMAP" id="MF_00076">
    <property type="entry name" value="HisB"/>
    <property type="match status" value="1"/>
</dbReference>
<dbReference type="InterPro" id="IPR038494">
    <property type="entry name" value="IGPD_sf"/>
</dbReference>
<dbReference type="InterPro" id="IPR000807">
    <property type="entry name" value="ImidazoleglycerolP_deHydtase"/>
</dbReference>
<dbReference type="InterPro" id="IPR020565">
    <property type="entry name" value="ImidazoleglycerP_deHydtase_CS"/>
</dbReference>
<dbReference type="InterPro" id="IPR020568">
    <property type="entry name" value="Ribosomal_Su5_D2-typ_SF"/>
</dbReference>
<dbReference type="NCBIfam" id="NF002111">
    <property type="entry name" value="PRK00951.2-1"/>
    <property type="match status" value="1"/>
</dbReference>
<dbReference type="NCBIfam" id="NF002114">
    <property type="entry name" value="PRK00951.2-4"/>
    <property type="match status" value="1"/>
</dbReference>
<dbReference type="NCBIfam" id="NF002116">
    <property type="entry name" value="PRK00951.2-6"/>
    <property type="match status" value="1"/>
</dbReference>
<dbReference type="PANTHER" id="PTHR23133:SF2">
    <property type="entry name" value="IMIDAZOLEGLYCEROL-PHOSPHATE DEHYDRATASE"/>
    <property type="match status" value="1"/>
</dbReference>
<dbReference type="PANTHER" id="PTHR23133">
    <property type="entry name" value="IMIDAZOLEGLYCEROL-PHOSPHATE DEHYDRATASE HIS7"/>
    <property type="match status" value="1"/>
</dbReference>
<dbReference type="Pfam" id="PF00475">
    <property type="entry name" value="IGPD"/>
    <property type="match status" value="1"/>
</dbReference>
<dbReference type="SUPFAM" id="SSF54211">
    <property type="entry name" value="Ribosomal protein S5 domain 2-like"/>
    <property type="match status" value="2"/>
</dbReference>
<dbReference type="PROSITE" id="PS00955">
    <property type="entry name" value="IGP_DEHYDRATASE_2"/>
    <property type="match status" value="1"/>
</dbReference>
<name>HIS7_DEHMC</name>
<evidence type="ECO:0000255" key="1">
    <source>
        <dbReference type="HAMAP-Rule" id="MF_00076"/>
    </source>
</evidence>
<keyword id="KW-0028">Amino-acid biosynthesis</keyword>
<keyword id="KW-0963">Cytoplasm</keyword>
<keyword id="KW-0368">Histidine biosynthesis</keyword>
<keyword id="KW-0456">Lyase</keyword>
<proteinExistence type="inferred from homology"/>
<accession>Q3ZXL9</accession>
<reference key="1">
    <citation type="journal article" date="2005" name="Nat. Biotechnol.">
        <title>Genome sequence of the chlorinated compound-respiring bacterium Dehalococcoides species strain CBDB1.</title>
        <authorList>
            <person name="Kube M."/>
            <person name="Beck A."/>
            <person name="Zinder S.H."/>
            <person name="Kuhl H."/>
            <person name="Reinhardt R."/>
            <person name="Adrian L."/>
        </authorList>
    </citation>
    <scope>NUCLEOTIDE SEQUENCE [LARGE SCALE GENOMIC DNA]</scope>
    <source>
        <strain>CBDB1</strain>
    </source>
</reference>